<gene>
    <name type="primary">ORP4B</name>
    <name type="ordered locus">At4g25850</name>
    <name type="ORF">F14M19.130</name>
</gene>
<sequence length="383" mass="43674">MAEEEMRKHLVLAKPFSLEDEKDSEHTASNVIRKILSLFKTVRPGSDLTNFQLPPQLNLPRSQLQCYGEMVYSFVGQDLLGECSRRDLPIERLKSVVTWNISTLRPVVFGMSPYNSVLGETHHVSNGHINVIAEQVVHHPPVSALHATHEQENIDVTWCQYFTPKFRGTHVDVEVKGKRVMKLLNHIETYEMDQPRLIMRFLPAPGAYWAGKVKIKCPETDLEAELHLISDSFIERFRGNNNRSIKGKIFESSSGNQLYNIFGHWDRTVMAKNIKTGELEVIYNAKENITGLKPPTVKNLEEVTESESTMVWSEVSEGILKKDWERAREAKIVVEEKQRASLKQREASGESWVPKHFLVVKDGKDWDCSPLQPTVPPAPLVIT</sequence>
<feature type="chain" id="PRO_0000402166" description="Oxysterol-binding protein-related protein 4B">
    <location>
        <begin position="1"/>
        <end position="383"/>
    </location>
</feature>
<name>ORP4B_ARATH</name>
<reference key="1">
    <citation type="journal article" date="1999" name="Nature">
        <title>Sequence and analysis of chromosome 4 of the plant Arabidopsis thaliana.</title>
        <authorList>
            <person name="Mayer K.F.X."/>
            <person name="Schueller C."/>
            <person name="Wambutt R."/>
            <person name="Murphy G."/>
            <person name="Volckaert G."/>
            <person name="Pohl T."/>
            <person name="Duesterhoeft A."/>
            <person name="Stiekema W."/>
            <person name="Entian K.-D."/>
            <person name="Terryn N."/>
            <person name="Harris B."/>
            <person name="Ansorge W."/>
            <person name="Brandt P."/>
            <person name="Grivell L.A."/>
            <person name="Rieger M."/>
            <person name="Weichselgartner M."/>
            <person name="de Simone V."/>
            <person name="Obermaier B."/>
            <person name="Mache R."/>
            <person name="Mueller M."/>
            <person name="Kreis M."/>
            <person name="Delseny M."/>
            <person name="Puigdomenech P."/>
            <person name="Watson M."/>
            <person name="Schmidtheini T."/>
            <person name="Reichert B."/>
            <person name="Portetelle D."/>
            <person name="Perez-Alonso M."/>
            <person name="Boutry M."/>
            <person name="Bancroft I."/>
            <person name="Vos P."/>
            <person name="Hoheisel J."/>
            <person name="Zimmermann W."/>
            <person name="Wedler H."/>
            <person name="Ridley P."/>
            <person name="Langham S.-A."/>
            <person name="McCullagh B."/>
            <person name="Bilham L."/>
            <person name="Robben J."/>
            <person name="van der Schueren J."/>
            <person name="Grymonprez B."/>
            <person name="Chuang Y.-J."/>
            <person name="Vandenbussche F."/>
            <person name="Braeken M."/>
            <person name="Weltjens I."/>
            <person name="Voet M."/>
            <person name="Bastiaens I."/>
            <person name="Aert R."/>
            <person name="Defoor E."/>
            <person name="Weitzenegger T."/>
            <person name="Bothe G."/>
            <person name="Ramsperger U."/>
            <person name="Hilbert H."/>
            <person name="Braun M."/>
            <person name="Holzer E."/>
            <person name="Brandt A."/>
            <person name="Peters S."/>
            <person name="van Staveren M."/>
            <person name="Dirkse W."/>
            <person name="Mooijman P."/>
            <person name="Klein Lankhorst R."/>
            <person name="Rose M."/>
            <person name="Hauf J."/>
            <person name="Koetter P."/>
            <person name="Berneiser S."/>
            <person name="Hempel S."/>
            <person name="Feldpausch M."/>
            <person name="Lamberth S."/>
            <person name="Van den Daele H."/>
            <person name="De Keyser A."/>
            <person name="Buysshaert C."/>
            <person name="Gielen J."/>
            <person name="Villarroel R."/>
            <person name="De Clercq R."/>
            <person name="van Montagu M."/>
            <person name="Rogers J."/>
            <person name="Cronin A."/>
            <person name="Quail M.A."/>
            <person name="Bray-Allen S."/>
            <person name="Clark L."/>
            <person name="Doggett J."/>
            <person name="Hall S."/>
            <person name="Kay M."/>
            <person name="Lennard N."/>
            <person name="McLay K."/>
            <person name="Mayes R."/>
            <person name="Pettett A."/>
            <person name="Rajandream M.A."/>
            <person name="Lyne M."/>
            <person name="Benes V."/>
            <person name="Rechmann S."/>
            <person name="Borkova D."/>
            <person name="Bloecker H."/>
            <person name="Scharfe M."/>
            <person name="Grimm M."/>
            <person name="Loehnert T.-H."/>
            <person name="Dose S."/>
            <person name="de Haan M."/>
            <person name="Maarse A.C."/>
            <person name="Schaefer M."/>
            <person name="Mueller-Auer S."/>
            <person name="Gabel C."/>
            <person name="Fuchs M."/>
            <person name="Fartmann B."/>
            <person name="Granderath K."/>
            <person name="Dauner D."/>
            <person name="Herzl A."/>
            <person name="Neumann S."/>
            <person name="Argiriou A."/>
            <person name="Vitale D."/>
            <person name="Liguori R."/>
            <person name="Piravandi E."/>
            <person name="Massenet O."/>
            <person name="Quigley F."/>
            <person name="Clabauld G."/>
            <person name="Muendlein A."/>
            <person name="Felber R."/>
            <person name="Schnabl S."/>
            <person name="Hiller R."/>
            <person name="Schmidt W."/>
            <person name="Lecharny A."/>
            <person name="Aubourg S."/>
            <person name="Chefdor F."/>
            <person name="Cooke R."/>
            <person name="Berger C."/>
            <person name="Monfort A."/>
            <person name="Casacuberta E."/>
            <person name="Gibbons T."/>
            <person name="Weber N."/>
            <person name="Vandenbol M."/>
            <person name="Bargues M."/>
            <person name="Terol J."/>
            <person name="Torres A."/>
            <person name="Perez-Perez A."/>
            <person name="Purnelle B."/>
            <person name="Bent E."/>
            <person name="Johnson S."/>
            <person name="Tacon D."/>
            <person name="Jesse T."/>
            <person name="Heijnen L."/>
            <person name="Schwarz S."/>
            <person name="Scholler P."/>
            <person name="Heber S."/>
            <person name="Francs P."/>
            <person name="Bielke C."/>
            <person name="Frishman D."/>
            <person name="Haase D."/>
            <person name="Lemcke K."/>
            <person name="Mewes H.-W."/>
            <person name="Stocker S."/>
            <person name="Zaccaria P."/>
            <person name="Bevan M."/>
            <person name="Wilson R.K."/>
            <person name="de la Bastide M."/>
            <person name="Habermann K."/>
            <person name="Parnell L."/>
            <person name="Dedhia N."/>
            <person name="Gnoj L."/>
            <person name="Schutz K."/>
            <person name="Huang E."/>
            <person name="Spiegel L."/>
            <person name="Sekhon M."/>
            <person name="Murray J."/>
            <person name="Sheet P."/>
            <person name="Cordes M."/>
            <person name="Abu-Threideh J."/>
            <person name="Stoneking T."/>
            <person name="Kalicki J."/>
            <person name="Graves T."/>
            <person name="Harmon G."/>
            <person name="Edwards J."/>
            <person name="Latreille P."/>
            <person name="Courtney L."/>
            <person name="Cloud J."/>
            <person name="Abbott A."/>
            <person name="Scott K."/>
            <person name="Johnson D."/>
            <person name="Minx P."/>
            <person name="Bentley D."/>
            <person name="Fulton B."/>
            <person name="Miller N."/>
            <person name="Greco T."/>
            <person name="Kemp K."/>
            <person name="Kramer J."/>
            <person name="Fulton L."/>
            <person name="Mardis E."/>
            <person name="Dante M."/>
            <person name="Pepin K."/>
            <person name="Hillier L.W."/>
            <person name="Nelson J."/>
            <person name="Spieth J."/>
            <person name="Ryan E."/>
            <person name="Andrews S."/>
            <person name="Geisel C."/>
            <person name="Layman D."/>
            <person name="Du H."/>
            <person name="Ali J."/>
            <person name="Berghoff A."/>
            <person name="Jones K."/>
            <person name="Drone K."/>
            <person name="Cotton M."/>
            <person name="Joshu C."/>
            <person name="Antonoiu B."/>
            <person name="Zidanic M."/>
            <person name="Strong C."/>
            <person name="Sun H."/>
            <person name="Lamar B."/>
            <person name="Yordan C."/>
            <person name="Ma P."/>
            <person name="Zhong J."/>
            <person name="Preston R."/>
            <person name="Vil D."/>
            <person name="Shekher M."/>
            <person name="Matero A."/>
            <person name="Shah R."/>
            <person name="Swaby I.K."/>
            <person name="O'Shaughnessy A."/>
            <person name="Rodriguez M."/>
            <person name="Hoffman J."/>
            <person name="Till S."/>
            <person name="Granat S."/>
            <person name="Shohdy N."/>
            <person name="Hasegawa A."/>
            <person name="Hameed A."/>
            <person name="Lodhi M."/>
            <person name="Johnson A."/>
            <person name="Chen E."/>
            <person name="Marra M.A."/>
            <person name="Martienssen R."/>
            <person name="McCombie W.R."/>
        </authorList>
    </citation>
    <scope>NUCLEOTIDE SEQUENCE [LARGE SCALE GENOMIC DNA]</scope>
    <source>
        <strain>cv. Columbia</strain>
    </source>
</reference>
<reference key="2">
    <citation type="journal article" date="2017" name="Plant J.">
        <title>Araport11: a complete reannotation of the Arabidopsis thaliana reference genome.</title>
        <authorList>
            <person name="Cheng C.Y."/>
            <person name="Krishnakumar V."/>
            <person name="Chan A.P."/>
            <person name="Thibaud-Nissen F."/>
            <person name="Schobel S."/>
            <person name="Town C.D."/>
        </authorList>
    </citation>
    <scope>GENOME REANNOTATION</scope>
    <source>
        <strain>cv. Columbia</strain>
    </source>
</reference>
<reference key="3">
    <citation type="journal article" date="2002" name="Science">
        <title>Functional annotation of a full-length Arabidopsis cDNA collection.</title>
        <authorList>
            <person name="Seki M."/>
            <person name="Narusaka M."/>
            <person name="Kamiya A."/>
            <person name="Ishida J."/>
            <person name="Satou M."/>
            <person name="Sakurai T."/>
            <person name="Nakajima M."/>
            <person name="Enju A."/>
            <person name="Akiyama K."/>
            <person name="Oono Y."/>
            <person name="Muramatsu M."/>
            <person name="Hayashizaki Y."/>
            <person name="Kawai J."/>
            <person name="Carninci P."/>
            <person name="Itoh M."/>
            <person name="Ishii Y."/>
            <person name="Arakawa T."/>
            <person name="Shibata K."/>
            <person name="Shinagawa A."/>
            <person name="Shinozaki K."/>
        </authorList>
    </citation>
    <scope>NUCLEOTIDE SEQUENCE [LARGE SCALE MRNA]</scope>
    <source>
        <strain>cv. Columbia</strain>
    </source>
</reference>
<reference key="4">
    <citation type="submission" date="2002-03" db="EMBL/GenBank/DDBJ databases">
        <title>Full-length cDNA from Arabidopsis thaliana.</title>
        <authorList>
            <person name="Brover V.V."/>
            <person name="Troukhan M.E."/>
            <person name="Alexandrov N.A."/>
            <person name="Lu Y.-P."/>
            <person name="Flavell R.B."/>
            <person name="Feldmann K.A."/>
        </authorList>
    </citation>
    <scope>NUCLEOTIDE SEQUENCE [LARGE SCALE MRNA]</scope>
</reference>
<reference key="5">
    <citation type="journal article" date="2006" name="Plant Mol. Biol.">
        <title>Identification and characterization of PiORP1, a Petunia oxysterol-binding-protein related protein involved in receptor-kinase mediated signaling in pollen, and analysis of the ORP gene family in Arabidopsis.</title>
        <authorList>
            <person name="Skirpan A.L."/>
            <person name="Dowd P.E."/>
            <person name="Sijacic P."/>
            <person name="Jaworski C.J."/>
            <person name="Gilroy S."/>
            <person name="Kao T.H."/>
        </authorList>
    </citation>
    <scope>TISSUE SPECIFICITY</scope>
    <scope>GENE FAMILY</scope>
    <scope>NOMENCLATURE</scope>
</reference>
<dbReference type="EMBL" id="AL049480">
    <property type="protein sequence ID" value="CAB39606.1"/>
    <property type="status" value="ALT_SEQ"/>
    <property type="molecule type" value="Genomic_DNA"/>
</dbReference>
<dbReference type="EMBL" id="AL161564">
    <property type="protein sequence ID" value="CAB79440.1"/>
    <property type="status" value="ALT_SEQ"/>
    <property type="molecule type" value="Genomic_DNA"/>
</dbReference>
<dbReference type="EMBL" id="CP002687">
    <property type="protein sequence ID" value="AEE85123.1"/>
    <property type="molecule type" value="Genomic_DNA"/>
</dbReference>
<dbReference type="EMBL" id="AK118071">
    <property type="protein sequence ID" value="BAC42702.1"/>
    <property type="status" value="ALT_SEQ"/>
    <property type="molecule type" value="mRNA"/>
</dbReference>
<dbReference type="EMBL" id="AY084235">
    <property type="protein sequence ID" value="AAM67264.1"/>
    <property type="molecule type" value="mRNA"/>
</dbReference>
<dbReference type="PIR" id="T04239">
    <property type="entry name" value="T04239"/>
</dbReference>
<dbReference type="RefSeq" id="NP_001328917.1">
    <property type="nucleotide sequence ID" value="NM_001341765.1"/>
</dbReference>
<dbReference type="RefSeq" id="NP_567732.1">
    <molecule id="Q9SW00-1"/>
    <property type="nucleotide sequence ID" value="NM_118718.2"/>
</dbReference>
<dbReference type="SMR" id="Q9SW00"/>
<dbReference type="FunCoup" id="Q9SW00">
    <property type="interactions" value="1763"/>
</dbReference>
<dbReference type="STRING" id="3702.Q9SW00"/>
<dbReference type="iPTMnet" id="Q9SW00"/>
<dbReference type="PaxDb" id="3702-AT4G25850.2"/>
<dbReference type="ProteomicsDB" id="226032">
    <molecule id="Q9SW00-1"/>
</dbReference>
<dbReference type="EnsemblPlants" id="AT4G25850.1">
    <molecule id="Q9SW00-1"/>
    <property type="protein sequence ID" value="AT4G25850.1"/>
    <property type="gene ID" value="AT4G25850"/>
</dbReference>
<dbReference type="GeneID" id="828691"/>
<dbReference type="Gramene" id="AT4G25850.1">
    <molecule id="Q9SW00-1"/>
    <property type="protein sequence ID" value="AT4G25850.1"/>
    <property type="gene ID" value="AT4G25850"/>
</dbReference>
<dbReference type="KEGG" id="ath:AT4G25850"/>
<dbReference type="Araport" id="AT4G25850"/>
<dbReference type="TAIR" id="AT4G25850">
    <property type="gene designation" value="ORP4B"/>
</dbReference>
<dbReference type="eggNOG" id="KOG2210">
    <property type="taxonomic scope" value="Eukaryota"/>
</dbReference>
<dbReference type="HOGENOM" id="CLU_044270_0_0_1"/>
<dbReference type="InParanoid" id="Q9SW00"/>
<dbReference type="OrthoDB" id="14833at2759"/>
<dbReference type="PhylomeDB" id="Q9SW00"/>
<dbReference type="PRO" id="PR:Q9SW00"/>
<dbReference type="Proteomes" id="UP000006548">
    <property type="component" value="Chromosome 4"/>
</dbReference>
<dbReference type="ExpressionAtlas" id="Q9SW00">
    <property type="expression patterns" value="baseline and differential"/>
</dbReference>
<dbReference type="GO" id="GO:0008289">
    <property type="term" value="F:lipid binding"/>
    <property type="evidence" value="ECO:0007669"/>
    <property type="project" value="UniProtKB-KW"/>
</dbReference>
<dbReference type="GO" id="GO:0006869">
    <property type="term" value="P:lipid transport"/>
    <property type="evidence" value="ECO:0007669"/>
    <property type="project" value="UniProtKB-KW"/>
</dbReference>
<dbReference type="FunFam" id="3.30.70.3490:FF:000007">
    <property type="entry name" value="Oxysterol-binding protein-related protein 4B"/>
    <property type="match status" value="1"/>
</dbReference>
<dbReference type="FunFam" id="2.40.160.120:FF:000011">
    <property type="entry name" value="Oxysterol-binding protein-related protein 4C"/>
    <property type="match status" value="1"/>
</dbReference>
<dbReference type="Gene3D" id="2.40.160.120">
    <property type="match status" value="1"/>
</dbReference>
<dbReference type="Gene3D" id="3.30.70.3490">
    <property type="match status" value="1"/>
</dbReference>
<dbReference type="InterPro" id="IPR037239">
    <property type="entry name" value="OSBP_sf"/>
</dbReference>
<dbReference type="InterPro" id="IPR000648">
    <property type="entry name" value="Oxysterol-bd"/>
</dbReference>
<dbReference type="PANTHER" id="PTHR10972:SF102">
    <property type="entry name" value="OXYSTEROL-BINDING PROTEIN"/>
    <property type="match status" value="1"/>
</dbReference>
<dbReference type="PANTHER" id="PTHR10972">
    <property type="entry name" value="OXYSTEROL-BINDING PROTEIN-RELATED"/>
    <property type="match status" value="1"/>
</dbReference>
<dbReference type="Pfam" id="PF01237">
    <property type="entry name" value="Oxysterol_BP"/>
    <property type="match status" value="1"/>
</dbReference>
<dbReference type="SUPFAM" id="SSF144000">
    <property type="entry name" value="Oxysterol-binding protein-like"/>
    <property type="match status" value="1"/>
</dbReference>
<proteinExistence type="evidence at transcript level"/>
<evidence type="ECO:0000250" key="1"/>
<evidence type="ECO:0000269" key="2">
    <source>
    </source>
</evidence>
<evidence type="ECO:0000305" key="3"/>
<keyword id="KW-0025">Alternative splicing</keyword>
<keyword id="KW-0445">Lipid transport</keyword>
<keyword id="KW-0446">Lipid-binding</keyword>
<keyword id="KW-1185">Reference proteome</keyword>
<keyword id="KW-0813">Transport</keyword>
<protein>
    <recommendedName>
        <fullName>Oxysterol-binding protein-related protein 4B</fullName>
    </recommendedName>
    <alternativeName>
        <fullName>OSBP-related protein 4B</fullName>
    </alternativeName>
</protein>
<accession>Q9SW00</accession>
<accession>Q8GXS2</accession>
<comment type="function">
    <text evidence="1">May be involved in the transport of sterols.</text>
</comment>
<comment type="alternative products">
    <event type="alternative splicing"/>
    <isoform>
        <id>Q9SW00-1</id>
        <name>1</name>
        <sequence type="displayed"/>
    </isoform>
    <text>A number of isoforms are produced. According to EST sequences.</text>
</comment>
<comment type="tissue specificity">
    <text evidence="2">Expressed in stems and flowers.</text>
</comment>
<comment type="similarity">
    <text evidence="3">Belongs to the OSBP family.</text>
</comment>
<comment type="sequence caution" evidence="3">
    <conflict type="miscellaneous discrepancy">
        <sequence resource="EMBL-CDS" id="BAC42702"/>
    </conflict>
    <text>Intron retention.</text>
</comment>
<comment type="sequence caution" evidence="3">
    <conflict type="erroneous gene model prediction">
        <sequence resource="EMBL-CDS" id="CAB39606"/>
    </conflict>
</comment>
<comment type="sequence caution" evidence="3">
    <conflict type="erroneous gene model prediction">
        <sequence resource="EMBL-CDS" id="CAB79440"/>
    </conflict>
</comment>
<organism>
    <name type="scientific">Arabidopsis thaliana</name>
    <name type="common">Mouse-ear cress</name>
    <dbReference type="NCBI Taxonomy" id="3702"/>
    <lineage>
        <taxon>Eukaryota</taxon>
        <taxon>Viridiplantae</taxon>
        <taxon>Streptophyta</taxon>
        <taxon>Embryophyta</taxon>
        <taxon>Tracheophyta</taxon>
        <taxon>Spermatophyta</taxon>
        <taxon>Magnoliopsida</taxon>
        <taxon>eudicotyledons</taxon>
        <taxon>Gunneridae</taxon>
        <taxon>Pentapetalae</taxon>
        <taxon>rosids</taxon>
        <taxon>malvids</taxon>
        <taxon>Brassicales</taxon>
        <taxon>Brassicaceae</taxon>
        <taxon>Camelineae</taxon>
        <taxon>Arabidopsis</taxon>
    </lineage>
</organism>